<gene>
    <name evidence="1" type="primary">rpsK</name>
    <name type="ordered locus">PA14_09090</name>
</gene>
<comment type="function">
    <text evidence="1">Located on the platform of the 30S subunit, it bridges several disparate RNA helices of the 16S rRNA. Forms part of the Shine-Dalgarno cleft in the 70S ribosome.</text>
</comment>
<comment type="subunit">
    <text evidence="1">Part of the 30S ribosomal subunit. Interacts with proteins S7 and S18. Binds to IF-3.</text>
</comment>
<comment type="similarity">
    <text evidence="1">Belongs to the universal ribosomal protein uS11 family.</text>
</comment>
<dbReference type="EMBL" id="CP000438">
    <property type="protein sequence ID" value="ABJ13511.1"/>
    <property type="molecule type" value="Genomic_DNA"/>
</dbReference>
<dbReference type="RefSeq" id="WP_003093689.1">
    <property type="nucleotide sequence ID" value="NZ_CP034244.1"/>
</dbReference>
<dbReference type="SMR" id="Q02T57"/>
<dbReference type="GeneID" id="88184059"/>
<dbReference type="KEGG" id="pau:PA14_09090"/>
<dbReference type="PseudoCAP" id="PA14_09090"/>
<dbReference type="HOGENOM" id="CLU_072439_5_0_6"/>
<dbReference type="BioCyc" id="PAER208963:G1G74-759-MONOMER"/>
<dbReference type="Proteomes" id="UP000000653">
    <property type="component" value="Chromosome"/>
</dbReference>
<dbReference type="GO" id="GO:1990904">
    <property type="term" value="C:ribonucleoprotein complex"/>
    <property type="evidence" value="ECO:0007669"/>
    <property type="project" value="UniProtKB-KW"/>
</dbReference>
<dbReference type="GO" id="GO:0005840">
    <property type="term" value="C:ribosome"/>
    <property type="evidence" value="ECO:0007669"/>
    <property type="project" value="UniProtKB-KW"/>
</dbReference>
<dbReference type="GO" id="GO:0019843">
    <property type="term" value="F:rRNA binding"/>
    <property type="evidence" value="ECO:0007669"/>
    <property type="project" value="UniProtKB-UniRule"/>
</dbReference>
<dbReference type="GO" id="GO:0003735">
    <property type="term" value="F:structural constituent of ribosome"/>
    <property type="evidence" value="ECO:0007669"/>
    <property type="project" value="InterPro"/>
</dbReference>
<dbReference type="GO" id="GO:0006412">
    <property type="term" value="P:translation"/>
    <property type="evidence" value="ECO:0007669"/>
    <property type="project" value="UniProtKB-UniRule"/>
</dbReference>
<dbReference type="FunFam" id="3.30.420.80:FF:000001">
    <property type="entry name" value="30S ribosomal protein S11"/>
    <property type="match status" value="1"/>
</dbReference>
<dbReference type="Gene3D" id="3.30.420.80">
    <property type="entry name" value="Ribosomal protein S11"/>
    <property type="match status" value="1"/>
</dbReference>
<dbReference type="HAMAP" id="MF_01310">
    <property type="entry name" value="Ribosomal_uS11"/>
    <property type="match status" value="1"/>
</dbReference>
<dbReference type="InterPro" id="IPR001971">
    <property type="entry name" value="Ribosomal_uS11"/>
</dbReference>
<dbReference type="InterPro" id="IPR019981">
    <property type="entry name" value="Ribosomal_uS11_bac-type"/>
</dbReference>
<dbReference type="InterPro" id="IPR018102">
    <property type="entry name" value="Ribosomal_uS11_CS"/>
</dbReference>
<dbReference type="InterPro" id="IPR036967">
    <property type="entry name" value="Ribosomal_uS11_sf"/>
</dbReference>
<dbReference type="NCBIfam" id="NF003698">
    <property type="entry name" value="PRK05309.1"/>
    <property type="match status" value="1"/>
</dbReference>
<dbReference type="NCBIfam" id="TIGR03632">
    <property type="entry name" value="uS11_bact"/>
    <property type="match status" value="1"/>
</dbReference>
<dbReference type="PANTHER" id="PTHR11759">
    <property type="entry name" value="40S RIBOSOMAL PROTEIN S14/30S RIBOSOMAL PROTEIN S11"/>
    <property type="match status" value="1"/>
</dbReference>
<dbReference type="Pfam" id="PF00411">
    <property type="entry name" value="Ribosomal_S11"/>
    <property type="match status" value="1"/>
</dbReference>
<dbReference type="PIRSF" id="PIRSF002131">
    <property type="entry name" value="Ribosomal_S11"/>
    <property type="match status" value="1"/>
</dbReference>
<dbReference type="SUPFAM" id="SSF53137">
    <property type="entry name" value="Translational machinery components"/>
    <property type="match status" value="1"/>
</dbReference>
<dbReference type="PROSITE" id="PS00054">
    <property type="entry name" value="RIBOSOMAL_S11"/>
    <property type="match status" value="1"/>
</dbReference>
<accession>Q02T57</accession>
<reference key="1">
    <citation type="journal article" date="2006" name="Genome Biol.">
        <title>Genomic analysis reveals that Pseudomonas aeruginosa virulence is combinatorial.</title>
        <authorList>
            <person name="Lee D.G."/>
            <person name="Urbach J.M."/>
            <person name="Wu G."/>
            <person name="Liberati N.T."/>
            <person name="Feinbaum R.L."/>
            <person name="Miyata S."/>
            <person name="Diggins L.T."/>
            <person name="He J."/>
            <person name="Saucier M."/>
            <person name="Deziel E."/>
            <person name="Friedman L."/>
            <person name="Li L."/>
            <person name="Grills G."/>
            <person name="Montgomery K."/>
            <person name="Kucherlapati R."/>
            <person name="Rahme L.G."/>
            <person name="Ausubel F.M."/>
        </authorList>
    </citation>
    <scope>NUCLEOTIDE SEQUENCE [LARGE SCALE GENOMIC DNA]</scope>
    <source>
        <strain>UCBPP-PA14</strain>
    </source>
</reference>
<name>RS11_PSEAB</name>
<protein>
    <recommendedName>
        <fullName evidence="1">Small ribosomal subunit protein uS11</fullName>
    </recommendedName>
    <alternativeName>
        <fullName evidence="2">30S ribosomal protein S11</fullName>
    </alternativeName>
</protein>
<keyword id="KW-0687">Ribonucleoprotein</keyword>
<keyword id="KW-0689">Ribosomal protein</keyword>
<keyword id="KW-0694">RNA-binding</keyword>
<keyword id="KW-0699">rRNA-binding</keyword>
<organism>
    <name type="scientific">Pseudomonas aeruginosa (strain UCBPP-PA14)</name>
    <dbReference type="NCBI Taxonomy" id="208963"/>
    <lineage>
        <taxon>Bacteria</taxon>
        <taxon>Pseudomonadati</taxon>
        <taxon>Pseudomonadota</taxon>
        <taxon>Gammaproteobacteria</taxon>
        <taxon>Pseudomonadales</taxon>
        <taxon>Pseudomonadaceae</taxon>
        <taxon>Pseudomonas</taxon>
    </lineage>
</organism>
<sequence length="129" mass="13630">MAKPAARPRKKVKKTVVDGIAHIHASFNNTIVTITDRQGNALSWATSGGSGFRGSRKSTPFAAQVAAERAGQAALEYGLKNLDVNVKGPGPGRESAVRALNACGYKIASITDVTPIPHNGCRPPKKRRV</sequence>
<feature type="chain" id="PRO_0000294826" description="Small ribosomal subunit protein uS11">
    <location>
        <begin position="1"/>
        <end position="129"/>
    </location>
</feature>
<proteinExistence type="inferred from homology"/>
<evidence type="ECO:0000255" key="1">
    <source>
        <dbReference type="HAMAP-Rule" id="MF_01310"/>
    </source>
</evidence>
<evidence type="ECO:0000305" key="2"/>